<reference key="1">
    <citation type="journal article" date="2003" name="J. Bacteriol.">
        <title>Complete genome sequence of the ammonia-oxidizing bacterium and obligate chemolithoautotroph Nitrosomonas europaea.</title>
        <authorList>
            <person name="Chain P."/>
            <person name="Lamerdin J.E."/>
            <person name="Larimer F.W."/>
            <person name="Regala W."/>
            <person name="Lao V."/>
            <person name="Land M.L."/>
            <person name="Hauser L."/>
            <person name="Hooper A.B."/>
            <person name="Klotz M.G."/>
            <person name="Norton J."/>
            <person name="Sayavedra-Soto L.A."/>
            <person name="Arciero D.M."/>
            <person name="Hommes N.G."/>
            <person name="Whittaker M.M."/>
            <person name="Arp D.J."/>
        </authorList>
    </citation>
    <scope>NUCLEOTIDE SEQUENCE [LARGE SCALE GENOMIC DNA]</scope>
    <source>
        <strain>ATCC 19718 / CIP 103999 / KCTC 2705 / NBRC 14298</strain>
    </source>
</reference>
<proteinExistence type="inferred from homology"/>
<organism>
    <name type="scientific">Nitrosomonas europaea (strain ATCC 19718 / CIP 103999 / KCTC 2705 / NBRC 14298)</name>
    <dbReference type="NCBI Taxonomy" id="228410"/>
    <lineage>
        <taxon>Bacteria</taxon>
        <taxon>Pseudomonadati</taxon>
        <taxon>Pseudomonadota</taxon>
        <taxon>Betaproteobacteria</taxon>
        <taxon>Nitrosomonadales</taxon>
        <taxon>Nitrosomonadaceae</taxon>
        <taxon>Nitrosomonas</taxon>
    </lineage>
</organism>
<gene>
    <name evidence="1" type="primary">pyrH</name>
    <name type="ordered locus">NE1716</name>
</gene>
<comment type="function">
    <text evidence="1">Catalyzes the reversible phosphorylation of UMP to UDP.</text>
</comment>
<comment type="catalytic activity">
    <reaction evidence="1">
        <text>UMP + ATP = UDP + ADP</text>
        <dbReference type="Rhea" id="RHEA:24400"/>
        <dbReference type="ChEBI" id="CHEBI:30616"/>
        <dbReference type="ChEBI" id="CHEBI:57865"/>
        <dbReference type="ChEBI" id="CHEBI:58223"/>
        <dbReference type="ChEBI" id="CHEBI:456216"/>
        <dbReference type="EC" id="2.7.4.22"/>
    </reaction>
</comment>
<comment type="activity regulation">
    <text evidence="1">Inhibited by UTP.</text>
</comment>
<comment type="pathway">
    <text evidence="1">Pyrimidine metabolism; CTP biosynthesis via de novo pathway; UDP from UMP (UMPK route): step 1/1.</text>
</comment>
<comment type="subunit">
    <text evidence="1">Homohexamer.</text>
</comment>
<comment type="subcellular location">
    <subcellularLocation>
        <location evidence="1">Cytoplasm</location>
    </subcellularLocation>
</comment>
<comment type="similarity">
    <text evidence="1">Belongs to the UMP kinase family.</text>
</comment>
<keyword id="KW-0067">ATP-binding</keyword>
<keyword id="KW-0963">Cytoplasm</keyword>
<keyword id="KW-0418">Kinase</keyword>
<keyword id="KW-0547">Nucleotide-binding</keyword>
<keyword id="KW-0665">Pyrimidine biosynthesis</keyword>
<keyword id="KW-1185">Reference proteome</keyword>
<keyword id="KW-0808">Transferase</keyword>
<dbReference type="EC" id="2.7.4.22" evidence="1"/>
<dbReference type="EMBL" id="AL954747">
    <property type="protein sequence ID" value="CAD85627.1"/>
    <property type="molecule type" value="Genomic_DNA"/>
</dbReference>
<dbReference type="RefSeq" id="WP_011112270.1">
    <property type="nucleotide sequence ID" value="NC_004757.1"/>
</dbReference>
<dbReference type="SMR" id="Q82TZ7"/>
<dbReference type="STRING" id="228410.NE1716"/>
<dbReference type="GeneID" id="87104876"/>
<dbReference type="KEGG" id="neu:NE1716"/>
<dbReference type="eggNOG" id="COG0528">
    <property type="taxonomic scope" value="Bacteria"/>
</dbReference>
<dbReference type="HOGENOM" id="CLU_033861_0_0_4"/>
<dbReference type="OrthoDB" id="9807458at2"/>
<dbReference type="PhylomeDB" id="Q82TZ7"/>
<dbReference type="UniPathway" id="UPA00159">
    <property type="reaction ID" value="UER00275"/>
</dbReference>
<dbReference type="Proteomes" id="UP000001416">
    <property type="component" value="Chromosome"/>
</dbReference>
<dbReference type="GO" id="GO:0005829">
    <property type="term" value="C:cytosol"/>
    <property type="evidence" value="ECO:0007669"/>
    <property type="project" value="TreeGrafter"/>
</dbReference>
<dbReference type="GO" id="GO:0005524">
    <property type="term" value="F:ATP binding"/>
    <property type="evidence" value="ECO:0007669"/>
    <property type="project" value="UniProtKB-KW"/>
</dbReference>
<dbReference type="GO" id="GO:0033862">
    <property type="term" value="F:UMP kinase activity"/>
    <property type="evidence" value="ECO:0007669"/>
    <property type="project" value="UniProtKB-EC"/>
</dbReference>
<dbReference type="GO" id="GO:0044210">
    <property type="term" value="P:'de novo' CTP biosynthetic process"/>
    <property type="evidence" value="ECO:0007669"/>
    <property type="project" value="UniProtKB-UniRule"/>
</dbReference>
<dbReference type="GO" id="GO:0006225">
    <property type="term" value="P:UDP biosynthetic process"/>
    <property type="evidence" value="ECO:0007669"/>
    <property type="project" value="TreeGrafter"/>
</dbReference>
<dbReference type="CDD" id="cd04254">
    <property type="entry name" value="AAK_UMPK-PyrH-Ec"/>
    <property type="match status" value="1"/>
</dbReference>
<dbReference type="FunFam" id="3.40.1160.10:FF:000001">
    <property type="entry name" value="Uridylate kinase"/>
    <property type="match status" value="1"/>
</dbReference>
<dbReference type="Gene3D" id="3.40.1160.10">
    <property type="entry name" value="Acetylglutamate kinase-like"/>
    <property type="match status" value="1"/>
</dbReference>
<dbReference type="HAMAP" id="MF_01220_B">
    <property type="entry name" value="PyrH_B"/>
    <property type="match status" value="1"/>
</dbReference>
<dbReference type="InterPro" id="IPR036393">
    <property type="entry name" value="AceGlu_kinase-like_sf"/>
</dbReference>
<dbReference type="InterPro" id="IPR001048">
    <property type="entry name" value="Asp/Glu/Uridylate_kinase"/>
</dbReference>
<dbReference type="InterPro" id="IPR011817">
    <property type="entry name" value="Uridylate_kinase"/>
</dbReference>
<dbReference type="InterPro" id="IPR015963">
    <property type="entry name" value="Uridylate_kinase_bac"/>
</dbReference>
<dbReference type="NCBIfam" id="TIGR02075">
    <property type="entry name" value="pyrH_bact"/>
    <property type="match status" value="1"/>
</dbReference>
<dbReference type="PANTHER" id="PTHR42833">
    <property type="entry name" value="URIDYLATE KINASE"/>
    <property type="match status" value="1"/>
</dbReference>
<dbReference type="PANTHER" id="PTHR42833:SF4">
    <property type="entry name" value="URIDYLATE KINASE PUMPKIN, CHLOROPLASTIC"/>
    <property type="match status" value="1"/>
</dbReference>
<dbReference type="Pfam" id="PF00696">
    <property type="entry name" value="AA_kinase"/>
    <property type="match status" value="1"/>
</dbReference>
<dbReference type="PIRSF" id="PIRSF005650">
    <property type="entry name" value="Uridylate_kin"/>
    <property type="match status" value="1"/>
</dbReference>
<dbReference type="SUPFAM" id="SSF53633">
    <property type="entry name" value="Carbamate kinase-like"/>
    <property type="match status" value="1"/>
</dbReference>
<evidence type="ECO:0000255" key="1">
    <source>
        <dbReference type="HAMAP-Rule" id="MF_01220"/>
    </source>
</evidence>
<feature type="chain" id="PRO_0000323905" description="Uridylate kinase">
    <location>
        <begin position="1"/>
        <end position="237"/>
    </location>
</feature>
<feature type="binding site" evidence="1">
    <location>
        <begin position="11"/>
        <end position="14"/>
    </location>
    <ligand>
        <name>ATP</name>
        <dbReference type="ChEBI" id="CHEBI:30616"/>
    </ligand>
</feature>
<feature type="binding site" evidence="1">
    <location>
        <position position="53"/>
    </location>
    <ligand>
        <name>UMP</name>
        <dbReference type="ChEBI" id="CHEBI:57865"/>
    </ligand>
</feature>
<feature type="binding site" evidence="1">
    <location>
        <position position="54"/>
    </location>
    <ligand>
        <name>ATP</name>
        <dbReference type="ChEBI" id="CHEBI:30616"/>
    </ligand>
</feature>
<feature type="binding site" evidence="1">
    <location>
        <position position="58"/>
    </location>
    <ligand>
        <name>ATP</name>
        <dbReference type="ChEBI" id="CHEBI:30616"/>
    </ligand>
</feature>
<feature type="binding site" evidence="1">
    <location>
        <position position="73"/>
    </location>
    <ligand>
        <name>UMP</name>
        <dbReference type="ChEBI" id="CHEBI:57865"/>
    </ligand>
</feature>
<feature type="binding site" evidence="1">
    <location>
        <begin position="134"/>
        <end position="141"/>
    </location>
    <ligand>
        <name>UMP</name>
        <dbReference type="ChEBI" id="CHEBI:57865"/>
    </ligand>
</feature>
<feature type="binding site" evidence="1">
    <location>
        <position position="161"/>
    </location>
    <ligand>
        <name>ATP</name>
        <dbReference type="ChEBI" id="CHEBI:30616"/>
    </ligand>
</feature>
<feature type="binding site" evidence="1">
    <location>
        <position position="167"/>
    </location>
    <ligand>
        <name>ATP</name>
        <dbReference type="ChEBI" id="CHEBI:30616"/>
    </ligand>
</feature>
<feature type="binding site" evidence="1">
    <location>
        <position position="170"/>
    </location>
    <ligand>
        <name>ATP</name>
        <dbReference type="ChEBI" id="CHEBI:30616"/>
    </ligand>
</feature>
<name>PYRH_NITEU</name>
<protein>
    <recommendedName>
        <fullName evidence="1">Uridylate kinase</fullName>
        <shortName evidence="1">UK</shortName>
        <ecNumber evidence="1">2.7.4.22</ecNumber>
    </recommendedName>
    <alternativeName>
        <fullName evidence="1">Uridine monophosphate kinase</fullName>
        <shortName evidence="1">UMP kinase</shortName>
        <shortName evidence="1">UMPK</shortName>
    </alternativeName>
</protein>
<accession>Q82TZ7</accession>
<sequence>MPVVYKRILLKLSGEALMGDGHYGIDRAVVEHIVVEVAGVLQLGVEVAIVVGGGNIFRGMKSAGDGMDRVTADYMGMLATTMNALALHDAMRRNGVVSRVQSALRIDQVVEPYVRGKALRYLDERKVVVFAAGTGNPFFTTDTAAALRGMEMNANIVLKATKVDGIYTSDPLKNKDAQRFQSLTFDEAISKNLQVMDATALTLCRDQKLPINVFSIFKTGALKRVIMGEDEGTSVFV</sequence>